<keyword id="KW-0903">Direct protein sequencing</keyword>
<keyword id="KW-1015">Disulfide bond</keyword>
<keyword id="KW-0960">Knottin</keyword>
<keyword id="KW-0611">Plant defense</keyword>
<protein>
    <recommendedName>
        <fullName>Cyclotide vibi-G</fullName>
    </recommendedName>
</protein>
<comment type="function">
    <text evidence="2 3 4">Probably participates in a plant defense mechanism. Has cytotoxic activity, active against a human lymphoma cell line with an IC(50) of 0.96 uM.</text>
</comment>
<comment type="domain">
    <text evidence="1">The presence of a 'disulfide through disulfide knot' structurally defines this protein as a knottin.</text>
</comment>
<comment type="PTM">
    <text evidence="2 3">This is a cyclic peptide.</text>
</comment>
<comment type="mass spectrometry" mass="3222.0" method="Electrospray" evidence="3"/>
<comment type="similarity">
    <text evidence="2">Belongs to the cyclotide family. Bracelet subfamily.</text>
</comment>
<comment type="caution">
    <text evidence="4">This peptide is cyclic. The start position was chosen by similarity to OAK1 (kalata-B1) for which the DNA sequence is known.</text>
</comment>
<name>CYVG_VIOBI</name>
<proteinExistence type="evidence at protein level"/>
<organism>
    <name type="scientific">Viola biflora</name>
    <name type="common">Yellow wood violet</name>
    <dbReference type="NCBI Taxonomy" id="214529"/>
    <lineage>
        <taxon>Eukaryota</taxon>
        <taxon>Viridiplantae</taxon>
        <taxon>Streptophyta</taxon>
        <taxon>Embryophyta</taxon>
        <taxon>Tracheophyta</taxon>
        <taxon>Spermatophyta</taxon>
        <taxon>Magnoliopsida</taxon>
        <taxon>eudicotyledons</taxon>
        <taxon>Gunneridae</taxon>
        <taxon>Pentapetalae</taxon>
        <taxon>rosids</taxon>
        <taxon>fabids</taxon>
        <taxon>Malpighiales</taxon>
        <taxon>Violaceae</taxon>
        <taxon>Viola</taxon>
        <taxon>Viola subgen. Viola</taxon>
        <taxon>Viola sect. Chamaemelanium</taxon>
    </lineage>
</organism>
<reference evidence="4" key="1">
    <citation type="journal article" date="2008" name="Phytochemistry">
        <title>The alpine violet, Viola biflora, is a rich source of cyclotides with potent cytotoxicity.</title>
        <authorList>
            <person name="Herrmann A."/>
            <person name="Burman R."/>
            <person name="Mylne J.S."/>
            <person name="Karlsson G."/>
            <person name="Gullbo J."/>
            <person name="Craik D.J."/>
            <person name="Clark R.J."/>
            <person name="Goeransson U."/>
        </authorList>
    </citation>
    <scope>PROTEIN SEQUENCE</scope>
    <scope>FUNCTION</scope>
    <scope>MASS SPECTROMETRY</scope>
</reference>
<accession>P85245</accession>
<feature type="peptide" id="PRO_0000341429" description="Cyclotide vibi-G">
    <location>
        <begin position="1"/>
        <end position="31"/>
    </location>
</feature>
<feature type="disulfide bond" evidence="1 2">
    <location>
        <begin position="5"/>
        <end position="21"/>
    </location>
</feature>
<feature type="disulfide bond" evidence="1 2">
    <location>
        <begin position="9"/>
        <end position="23"/>
    </location>
</feature>
<feature type="disulfide bond" evidence="1 2">
    <location>
        <begin position="14"/>
        <end position="28"/>
    </location>
</feature>
<feature type="cross-link" description="Cyclopeptide (Gly-Asn)" evidence="3">
    <location>
        <begin position="1"/>
        <end position="31"/>
    </location>
</feature>
<sequence length="31" mass="3247">GTFPCGESCVFIPCLTSAIGCSCKSKVCYKN</sequence>
<dbReference type="SMR" id="P85245"/>
<dbReference type="GO" id="GO:0006952">
    <property type="term" value="P:defense response"/>
    <property type="evidence" value="ECO:0007669"/>
    <property type="project" value="UniProtKB-KW"/>
</dbReference>
<dbReference type="InterPro" id="IPR005535">
    <property type="entry name" value="Cyclotide"/>
</dbReference>
<dbReference type="InterPro" id="IPR012323">
    <property type="entry name" value="Cyclotide_bracelet_CS"/>
</dbReference>
<dbReference type="InterPro" id="IPR036146">
    <property type="entry name" value="Cyclotide_sf"/>
</dbReference>
<dbReference type="Pfam" id="PF03784">
    <property type="entry name" value="Cyclotide"/>
    <property type="match status" value="1"/>
</dbReference>
<dbReference type="PIRSF" id="PIRSF037891">
    <property type="entry name" value="Cycloviolacin"/>
    <property type="match status" value="1"/>
</dbReference>
<dbReference type="SUPFAM" id="SSF57038">
    <property type="entry name" value="Cyclotides"/>
    <property type="match status" value="1"/>
</dbReference>
<dbReference type="PROSITE" id="PS51052">
    <property type="entry name" value="CYCLOTIDE"/>
    <property type="match status" value="1"/>
</dbReference>
<dbReference type="PROSITE" id="PS60008">
    <property type="entry name" value="CYCLOTIDE_BRACELET"/>
    <property type="match status" value="1"/>
</dbReference>
<evidence type="ECO:0000250" key="1">
    <source>
        <dbReference type="UniProtKB" id="P82230"/>
    </source>
</evidence>
<evidence type="ECO:0000255" key="2">
    <source>
        <dbReference type="PROSITE-ProRule" id="PRU00395"/>
    </source>
</evidence>
<evidence type="ECO:0000269" key="3">
    <source>
    </source>
</evidence>
<evidence type="ECO:0000305" key="4"/>